<sequence length="546" mass="61238">MPGFQNANISDLAPPAREKTFDDTIAVKIPEDEKNTWFSWRKLWAFTGPGFLMSIAYLDPGNIESDLQAGAQAEYKLLWVLLVSHIVGMLLQRMSARLGVVSGKHMAEIAYDYYPLVPRIILWLMIEIAIVCSDMQEVIGTAIAIYLLSSGKIPLLVGVLITILDTFTFLFIDRYGIRKLEFIFVALISTMAISFGYEFVVMKPVLTKVLTGTVVPWCSGCGKEEIITAISIFGAVIMPHNFYLHSALVKSRKVDRSSKTRIAEANKYFSIESAFALSVSFFINLFVLSVFARGLYQKTNGDVNSMCLSHNDIPDSNVFPNNTSSVTVDLFQGGIYLGCQFGLFAMIIWAIGIFAAGQSSTMTGTYTGQFVMEGFVRISWPKWKRVLITRAVAITPTLILCIKAHGIKNLTGMNDFLNCVQMVQLPFALIPMITFTSSKRIMHNFRTSKPLQYFSIICGIITIGINVYFIFQYVTENFGTGWLIFVIIGPFTLLYIAFILYLAIYCLVACELMNDTVNLPGFDFHRTLELDAPWITETFVVNDVYF</sequence>
<feature type="chain" id="PRO_0000437465" description="NRAMP-like transporter smf-2" evidence="6">
    <location>
        <begin position="1"/>
        <end position="546"/>
    </location>
</feature>
<feature type="topological domain" description="Cytoplasmic" evidence="6">
    <location>
        <begin position="1"/>
        <end position="42"/>
    </location>
</feature>
<feature type="transmembrane region" description="Helical" evidence="1">
    <location>
        <begin position="43"/>
        <end position="63"/>
    </location>
</feature>
<feature type="topological domain" description="Extracellular" evidence="6">
    <location>
        <begin position="64"/>
        <end position="70"/>
    </location>
</feature>
<feature type="transmembrane region" description="Helical" evidence="1">
    <location>
        <begin position="71"/>
        <end position="91"/>
    </location>
</feature>
<feature type="topological domain" description="Cytoplasmic" evidence="6">
    <location>
        <begin position="92"/>
        <end position="119"/>
    </location>
</feature>
<feature type="transmembrane region" description="Helical" evidence="1">
    <location>
        <begin position="120"/>
        <end position="140"/>
    </location>
</feature>
<feature type="topological domain" description="Extracellular" evidence="6">
    <location>
        <begin position="141"/>
        <end position="152"/>
    </location>
</feature>
<feature type="transmembrane region" description="Helical" evidence="1">
    <location>
        <begin position="153"/>
        <end position="173"/>
    </location>
</feature>
<feature type="topological domain" description="Cytoplasmic" evidence="6">
    <location>
        <begin position="174"/>
        <end position="181"/>
    </location>
</feature>
<feature type="transmembrane region" description="Helical" evidence="1">
    <location>
        <begin position="182"/>
        <end position="202"/>
    </location>
</feature>
<feature type="topological domain" description="Extracellular" evidence="6">
    <location>
        <begin position="203"/>
        <end position="228"/>
    </location>
</feature>
<feature type="transmembrane region" description="Helical" evidence="1">
    <location>
        <begin position="229"/>
        <end position="249"/>
    </location>
</feature>
<feature type="topological domain" description="Cytoplasmic" evidence="6">
    <location>
        <begin position="250"/>
        <end position="270"/>
    </location>
</feature>
<feature type="transmembrane region" description="Helical" evidence="1">
    <location>
        <begin position="271"/>
        <end position="291"/>
    </location>
</feature>
<feature type="topological domain" description="Extracellular" evidence="6">
    <location>
        <begin position="292"/>
        <end position="334"/>
    </location>
</feature>
<feature type="transmembrane region" description="Helical" evidence="1">
    <location>
        <begin position="335"/>
        <end position="355"/>
    </location>
</feature>
<feature type="topological domain" description="Cytoplasmic" evidence="6">
    <location>
        <begin position="356"/>
        <end position="386"/>
    </location>
</feature>
<feature type="transmembrane region" description="Helical" evidence="1">
    <location>
        <begin position="387"/>
        <end position="407"/>
    </location>
</feature>
<feature type="topological domain" description="Extracellular" evidence="6">
    <location>
        <begin position="408"/>
        <end position="415"/>
    </location>
</feature>
<feature type="transmembrane region" description="Helical" evidence="1">
    <location>
        <begin position="416"/>
        <end position="436"/>
    </location>
</feature>
<feature type="topological domain" description="Cytoplasmic" evidence="6">
    <location>
        <begin position="437"/>
        <end position="453"/>
    </location>
</feature>
<feature type="transmembrane region" description="Helical" evidence="1">
    <location>
        <begin position="454"/>
        <end position="474"/>
    </location>
</feature>
<feature type="topological domain" description="Extracellular" evidence="6">
    <location>
        <begin position="475"/>
        <end position="483"/>
    </location>
</feature>
<feature type="transmembrane region" description="Helical" evidence="1">
    <location>
        <begin position="484"/>
        <end position="504"/>
    </location>
</feature>
<feature type="topological domain" description="Cytoplasmic" evidence="6">
    <location>
        <begin position="505"/>
        <end position="546"/>
    </location>
</feature>
<feature type="glycosylation site" description="N-linked (GlcNAc...) asparagine" evidence="2">
    <location>
        <position position="321"/>
    </location>
</feature>
<feature type="glycosylation site" description="N-linked (GlcNAc...) asparagine" evidence="2">
    <location>
        <position position="409"/>
    </location>
</feature>
<keyword id="KW-1003">Cell membrane</keyword>
<keyword id="KW-0968">Cytoplasmic vesicle</keyword>
<keyword id="KW-0325">Glycoprotein</keyword>
<keyword id="KW-0406">Ion transport</keyword>
<keyword id="KW-0472">Membrane</keyword>
<keyword id="KW-1185">Reference proteome</keyword>
<keyword id="KW-0812">Transmembrane</keyword>
<keyword id="KW-1133">Transmembrane helix</keyword>
<keyword id="KW-0813">Transport</keyword>
<comment type="function">
    <text evidence="4 5">Probable divalent metal ion transporter which regulates Mn(2+) uptake.</text>
</comment>
<comment type="subcellular location">
    <subcellularLocation>
        <location evidence="5">Apical cell membrane</location>
        <topology evidence="1">Multi-pass membrane protein</topology>
    </subcellularLocation>
    <subcellularLocation>
        <location evidence="5">Cytoplasmic vesicle membrane</location>
    </subcellularLocation>
    <text evidence="5">Predominantly localizes in cytoplasmic vesicles in epithelial cells.</text>
</comment>
<comment type="tissue specificity">
    <text evidence="4 5">Expressed in dopaminergic neurons (at protein level) (PubMed:19801673). Primarily expressed in mc1, mc2 and mc3 epithelial cells of the pharynx and vpil-6 pharyngeal-intestinal valve cells displaying an anterior-posterior expression gradient (PubMed:19924247). Expressed in gonad sheath cells (PubMed:19924247).</text>
</comment>
<comment type="induction">
    <text evidence="4 5">Slightly repressed by high levels of Mn(2+) (PubMed:19801673, PubMed:19924247).</text>
</comment>
<comment type="disruption phenotype">
    <text evidence="3 4 5">Increased mortality rate and increased body levels of Mn(2+) when Mn(2+) levels are high in the environment (PubMed:19785996, PubMed:19924247). Reduced survival rate in response to infection mediated by pathogenic bacterium S.aureus (PubMed:19785996). Iron levels are low, independently of Mn(2+) levels (PubMed:19924247). RNAi-mediated knockdown partially prevents CEP neuron death mediated by the neurotoxin 6-hydroxy dopamine (6-OHDA) but not when mediated by high levels of Mn(2+) (PubMed:19801673).</text>
</comment>
<comment type="similarity">
    <text evidence="6">Belongs to the NRAMP family.</text>
</comment>
<dbReference type="EMBL" id="BX284606">
    <property type="protein sequence ID" value="CCD70795.2"/>
    <property type="molecule type" value="Genomic_DNA"/>
</dbReference>
<dbReference type="RefSeq" id="NP_509131.2">
    <property type="nucleotide sequence ID" value="NM_076730.3"/>
</dbReference>
<dbReference type="SMR" id="Q21433"/>
<dbReference type="FunCoup" id="Q21433">
    <property type="interactions" value="2382"/>
</dbReference>
<dbReference type="STRING" id="6239.K11G12.3.1"/>
<dbReference type="GlyCosmos" id="Q21433">
    <property type="glycosylation" value="2 sites, No reported glycans"/>
</dbReference>
<dbReference type="PaxDb" id="6239-K11G12.3"/>
<dbReference type="PeptideAtlas" id="Q21433"/>
<dbReference type="EnsemblMetazoa" id="K11G12.3.1">
    <property type="protein sequence ID" value="K11G12.3.1"/>
    <property type="gene ID" value="WBGene00004877"/>
</dbReference>
<dbReference type="GeneID" id="191766"/>
<dbReference type="KEGG" id="cel:CELE_K11G12.3"/>
<dbReference type="UCSC" id="K11G12.3">
    <property type="organism name" value="c. elegans"/>
</dbReference>
<dbReference type="AGR" id="WB:WBGene00004877"/>
<dbReference type="CTD" id="191766"/>
<dbReference type="WormBase" id="K11G12.3">
    <property type="protein sequence ID" value="CE47234"/>
    <property type="gene ID" value="WBGene00004877"/>
    <property type="gene designation" value="smf-2"/>
</dbReference>
<dbReference type="eggNOG" id="KOG1291">
    <property type="taxonomic scope" value="Eukaryota"/>
</dbReference>
<dbReference type="HOGENOM" id="CLU_020088_5_2_1"/>
<dbReference type="InParanoid" id="Q21433"/>
<dbReference type="OMA" id="AEIAYDY"/>
<dbReference type="OrthoDB" id="409173at2759"/>
<dbReference type="PhylomeDB" id="Q21433"/>
<dbReference type="Reactome" id="R-CEL-1222556">
    <property type="pathway name" value="ROS and RNS production in phagocytes"/>
</dbReference>
<dbReference type="Reactome" id="R-CEL-425410">
    <property type="pathway name" value="Metal ion SLC transporters"/>
</dbReference>
<dbReference type="Reactome" id="R-CEL-6798695">
    <property type="pathway name" value="Neutrophil degranulation"/>
</dbReference>
<dbReference type="Reactome" id="R-CEL-6803544">
    <property type="pathway name" value="Ion influx/efflux at host-pathogen interface"/>
</dbReference>
<dbReference type="PRO" id="PR:Q21433"/>
<dbReference type="Proteomes" id="UP000001940">
    <property type="component" value="Chromosome X"/>
</dbReference>
<dbReference type="GO" id="GO:0016324">
    <property type="term" value="C:apical plasma membrane"/>
    <property type="evidence" value="ECO:0000314"/>
    <property type="project" value="WormBase"/>
</dbReference>
<dbReference type="GO" id="GO:0010008">
    <property type="term" value="C:endosome membrane"/>
    <property type="evidence" value="ECO:0000318"/>
    <property type="project" value="GO_Central"/>
</dbReference>
<dbReference type="GO" id="GO:0043229">
    <property type="term" value="C:intracellular organelle"/>
    <property type="evidence" value="ECO:0000314"/>
    <property type="project" value="WormBase"/>
</dbReference>
<dbReference type="GO" id="GO:0005886">
    <property type="term" value="C:plasma membrane"/>
    <property type="evidence" value="ECO:0000318"/>
    <property type="project" value="GO_Central"/>
</dbReference>
<dbReference type="GO" id="GO:0015086">
    <property type="term" value="F:cadmium ion transmembrane transporter activity"/>
    <property type="evidence" value="ECO:0000318"/>
    <property type="project" value="GO_Central"/>
</dbReference>
<dbReference type="GO" id="GO:0005381">
    <property type="term" value="F:iron ion transmembrane transporter activity"/>
    <property type="evidence" value="ECO:0000318"/>
    <property type="project" value="GO_Central"/>
</dbReference>
<dbReference type="GO" id="GO:0005384">
    <property type="term" value="F:manganese ion transmembrane transporter activity"/>
    <property type="evidence" value="ECO:0000318"/>
    <property type="project" value="GO_Central"/>
</dbReference>
<dbReference type="GO" id="GO:0046915">
    <property type="term" value="F:transition metal ion transmembrane transporter activity"/>
    <property type="evidence" value="ECO:0000250"/>
    <property type="project" value="WormBase"/>
</dbReference>
<dbReference type="GO" id="GO:0006879">
    <property type="term" value="P:intracellular iron ion homeostasis"/>
    <property type="evidence" value="ECO:0000315"/>
    <property type="project" value="WormBase"/>
</dbReference>
<dbReference type="GO" id="GO:0034755">
    <property type="term" value="P:iron ion transmembrane transport"/>
    <property type="evidence" value="ECO:0000318"/>
    <property type="project" value="GO_Central"/>
</dbReference>
<dbReference type="GO" id="GO:0055071">
    <property type="term" value="P:manganese ion homeostasis"/>
    <property type="evidence" value="ECO:0000315"/>
    <property type="project" value="WormBase"/>
</dbReference>
<dbReference type="GO" id="GO:0006828">
    <property type="term" value="P:manganese ion transport"/>
    <property type="evidence" value="ECO:0000318"/>
    <property type="project" value="GO_Central"/>
</dbReference>
<dbReference type="GO" id="GO:0010042">
    <property type="term" value="P:response to manganese ion"/>
    <property type="evidence" value="ECO:0000315"/>
    <property type="project" value="WormBase"/>
</dbReference>
<dbReference type="GO" id="GO:0010038">
    <property type="term" value="P:response to metal ion"/>
    <property type="evidence" value="ECO:0000316"/>
    <property type="project" value="WormBase"/>
</dbReference>
<dbReference type="GO" id="GO:0000041">
    <property type="term" value="P:transition metal ion transport"/>
    <property type="evidence" value="ECO:0000250"/>
    <property type="project" value="WormBase"/>
</dbReference>
<dbReference type="HAMAP" id="MF_00221">
    <property type="entry name" value="NRAMP"/>
    <property type="match status" value="1"/>
</dbReference>
<dbReference type="InterPro" id="IPR001046">
    <property type="entry name" value="NRAMP_fam"/>
</dbReference>
<dbReference type="NCBIfam" id="TIGR01197">
    <property type="entry name" value="nramp"/>
    <property type="match status" value="1"/>
</dbReference>
<dbReference type="NCBIfam" id="NF037982">
    <property type="entry name" value="Nramp_1"/>
    <property type="match status" value="1"/>
</dbReference>
<dbReference type="PANTHER" id="PTHR11706:SF26">
    <property type="entry name" value="NRAMP-LIKE TRANSPORTER SMF-2"/>
    <property type="match status" value="1"/>
</dbReference>
<dbReference type="PANTHER" id="PTHR11706">
    <property type="entry name" value="SOLUTE CARRIER PROTEIN FAMILY 11 MEMBER"/>
    <property type="match status" value="1"/>
</dbReference>
<dbReference type="Pfam" id="PF01566">
    <property type="entry name" value="Nramp"/>
    <property type="match status" value="1"/>
</dbReference>
<dbReference type="PRINTS" id="PR00447">
    <property type="entry name" value="NATRESASSCMP"/>
</dbReference>
<evidence type="ECO:0000255" key="1"/>
<evidence type="ECO:0000255" key="2">
    <source>
        <dbReference type="PROSITE-ProRule" id="PRU00498"/>
    </source>
</evidence>
<evidence type="ECO:0000269" key="3">
    <source>
    </source>
</evidence>
<evidence type="ECO:0000269" key="4">
    <source>
    </source>
</evidence>
<evidence type="ECO:0000269" key="5">
    <source>
    </source>
</evidence>
<evidence type="ECO:0000305" key="6"/>
<evidence type="ECO:0000312" key="7">
    <source>
        <dbReference type="Proteomes" id="UP000001940"/>
    </source>
</evidence>
<evidence type="ECO:0000312" key="8">
    <source>
        <dbReference type="WormBase" id="K11G12.3"/>
    </source>
</evidence>
<accession>Q21433</accession>
<name>NRAMB_CAEEL</name>
<protein>
    <recommendedName>
        <fullName evidence="6">NRAMP-like transporter smf-2</fullName>
    </recommendedName>
    <alternativeName>
        <fullName evidence="6">Divalent metal transporter smf-2</fullName>
    </alternativeName>
</protein>
<gene>
    <name evidence="8" type="primary">smf-2</name>
    <name evidence="8" type="ORF">K11G12.3</name>
</gene>
<reference evidence="7" key="1">
    <citation type="journal article" date="1998" name="Science">
        <title>Genome sequence of the nematode C. elegans: a platform for investigating biology.</title>
        <authorList>
            <consortium name="The C. elegans sequencing consortium"/>
        </authorList>
    </citation>
    <scope>NUCLEOTIDE SEQUENCE [LARGE SCALE GENOMIC DNA]</scope>
    <source>
        <strain evidence="7">Bristol N2</strain>
    </source>
</reference>
<reference evidence="6" key="2">
    <citation type="journal article" date="2009" name="Biochem. Biophys. Res. Commun.">
        <title>Functional assessment of Nramp-like metal transporters and manganese in Caenorhabditis elegans.</title>
        <authorList>
            <person name="Bandyopadhyay J."/>
            <person name="Song H.O."/>
            <person name="Park B.J."/>
            <person name="Singaravelu G."/>
            <person name="Sun J.L."/>
            <person name="Ahnn J."/>
            <person name="Cho J.H."/>
        </authorList>
    </citation>
    <scope>DISRUPTION PHENOTYPE</scope>
</reference>
<reference evidence="6" key="3">
    <citation type="journal article" date="2009" name="J. Biol. Chem.">
        <title>The divalent metal transporter homologues SMF-1/2 mediate dopamine neuron sensitivity in caenorhabditis elegans models of manganism and parkinson disease.</title>
        <authorList>
            <person name="Settivari R."/>
            <person name="Levora J."/>
            <person name="Nass R."/>
        </authorList>
    </citation>
    <scope>FUNCTION</scope>
    <scope>TISSUE SPECIFICITY</scope>
    <scope>INDUCTION BY MANGANESE</scope>
    <scope>DISRUPTION PHENOTYPE</scope>
</reference>
<reference evidence="6" key="4">
    <citation type="journal article" date="2009" name="PLoS ONE">
        <title>SMF-1, SMF-2 and SMF-3 DMT1 orthologues regulate and are regulated differentially by manganese levels in C. elegans.</title>
        <authorList>
            <person name="Au C."/>
            <person name="Benedetto A."/>
            <person name="Anderson J."/>
            <person name="Labrousse A."/>
            <person name="Erikson K."/>
            <person name="Ewbank J.J."/>
            <person name="Aschner M."/>
        </authorList>
    </citation>
    <scope>FUNCTION</scope>
    <scope>SUBCELLULAR LOCATION</scope>
    <scope>TISSUE SPECIFICITY</scope>
    <scope>INDUCTION BY MANGANESE</scope>
    <scope>DISRUPTION PHENOTYPE</scope>
</reference>
<proteinExistence type="evidence at protein level"/>
<organism evidence="7">
    <name type="scientific">Caenorhabditis elegans</name>
    <dbReference type="NCBI Taxonomy" id="6239"/>
    <lineage>
        <taxon>Eukaryota</taxon>
        <taxon>Metazoa</taxon>
        <taxon>Ecdysozoa</taxon>
        <taxon>Nematoda</taxon>
        <taxon>Chromadorea</taxon>
        <taxon>Rhabditida</taxon>
        <taxon>Rhabditina</taxon>
        <taxon>Rhabditomorpha</taxon>
        <taxon>Rhabditoidea</taxon>
        <taxon>Rhabditidae</taxon>
        <taxon>Peloderinae</taxon>
        <taxon>Caenorhabditis</taxon>
    </lineage>
</organism>